<name>G1PDH_METM7</name>
<feature type="chain" id="PRO_0000350655" description="Glycerol-1-phosphate dehydrogenase [NAD(P)+]">
    <location>
        <begin position="1"/>
        <end position="334"/>
    </location>
</feature>
<feature type="binding site" evidence="1">
    <location>
        <begin position="77"/>
        <end position="81"/>
    </location>
    <ligand>
        <name>NAD(+)</name>
        <dbReference type="ChEBI" id="CHEBI:57540"/>
    </ligand>
</feature>
<feature type="binding site" evidence="1">
    <location>
        <begin position="99"/>
        <end position="102"/>
    </location>
    <ligand>
        <name>NAD(+)</name>
        <dbReference type="ChEBI" id="CHEBI:57540"/>
    </ligand>
</feature>
<feature type="binding site" evidence="1">
    <location>
        <position position="104"/>
    </location>
    <ligand>
        <name>substrate</name>
    </ligand>
</feature>
<feature type="binding site" evidence="1">
    <location>
        <position position="108"/>
    </location>
    <ligand>
        <name>NAD(+)</name>
        <dbReference type="ChEBI" id="CHEBI:57540"/>
    </ligand>
</feature>
<feature type="binding site" evidence="1">
    <location>
        <position position="147"/>
    </location>
    <ligand>
        <name>substrate</name>
    </ligand>
</feature>
<feature type="binding site" evidence="1">
    <location>
        <position position="147"/>
    </location>
    <ligand>
        <name>Zn(2+)</name>
        <dbReference type="ChEBI" id="CHEBI:29105"/>
        <note>catalytic</note>
    </ligand>
</feature>
<feature type="binding site" evidence="1">
    <location>
        <position position="225"/>
    </location>
    <ligand>
        <name>Zn(2+)</name>
        <dbReference type="ChEBI" id="CHEBI:29105"/>
        <note>catalytic</note>
    </ligand>
</feature>
<feature type="binding site" evidence="1">
    <location>
        <position position="229"/>
    </location>
    <ligand>
        <name>substrate</name>
    </ligand>
</feature>
<feature type="binding site" evidence="1">
    <location>
        <position position="246"/>
    </location>
    <ligand>
        <name>Zn(2+)</name>
        <dbReference type="ChEBI" id="CHEBI:29105"/>
        <note>catalytic</note>
    </ligand>
</feature>
<gene>
    <name evidence="1" type="primary">egsA</name>
    <name type="ordered locus">MmarC7_1225</name>
</gene>
<sequence length="334" mass="36763">MIVIPRYTIIKEKASIRIPEILDNLNLKNPLVITGKNTQKYNKDFDFIYYDEIETSDLENLKNYTKDYDSVIGIGGGRPIDIGKLIAHKSKKPFLSVPTTASNDGIASPIVSLTQPSYMTEAPIAIIADTEIIKKSPKKLLSAGMGDIVSNITAVLDWELGKIEKLEKYSDSSGIFSKTIAIELMDYVLNSDLEEYPKKLVKALIGSGISIAIAHSSRPASGSEHLFSHALDNMKEKYGIDTNSLHGEQCGVGTLAIAQIYLEEGKIEVETVEMIKNSLKAVDAPVTAKQLGFDEEILSEALSSAHSLRNRHTILRNGLSKEKAREILEKSEII</sequence>
<protein>
    <recommendedName>
        <fullName evidence="1">Glycerol-1-phosphate dehydrogenase [NAD(P)+]</fullName>
        <shortName evidence="1">G1P dehydrogenase</shortName>
        <shortName evidence="1">G1PDH</shortName>
        <ecNumber evidence="1">1.1.1.261</ecNumber>
    </recommendedName>
    <alternativeName>
        <fullName evidence="1">Enantiomeric glycerophosphate synthase</fullName>
    </alternativeName>
    <alternativeName>
        <fullName evidence="1">sn-glycerol-1-phosphate dehydrogenase</fullName>
    </alternativeName>
</protein>
<accession>A6VIL2</accession>
<evidence type="ECO:0000255" key="1">
    <source>
        <dbReference type="HAMAP-Rule" id="MF_00497"/>
    </source>
</evidence>
<organism>
    <name type="scientific">Methanococcus maripaludis (strain C7 / ATCC BAA-1331)</name>
    <dbReference type="NCBI Taxonomy" id="426368"/>
    <lineage>
        <taxon>Archaea</taxon>
        <taxon>Methanobacteriati</taxon>
        <taxon>Methanobacteriota</taxon>
        <taxon>Methanomada group</taxon>
        <taxon>Methanococci</taxon>
        <taxon>Methanococcales</taxon>
        <taxon>Methanococcaceae</taxon>
        <taxon>Methanococcus</taxon>
    </lineage>
</organism>
<comment type="function">
    <text evidence="1">Catalyzes the NAD(P)H-dependent reduction of dihydroxyacetonephosphate (DHAP or glycerone phosphate) to glycerol 1-phosphate (G1P). The G1P thus generated is used as the glycerophosphate backbone of phospholipids in the cellular membranes of Archaea.</text>
</comment>
<comment type="catalytic activity">
    <reaction evidence="1">
        <text>sn-glycerol 1-phosphate + NAD(+) = dihydroxyacetone phosphate + NADH + H(+)</text>
        <dbReference type="Rhea" id="RHEA:21412"/>
        <dbReference type="ChEBI" id="CHEBI:15378"/>
        <dbReference type="ChEBI" id="CHEBI:57540"/>
        <dbReference type="ChEBI" id="CHEBI:57642"/>
        <dbReference type="ChEBI" id="CHEBI:57685"/>
        <dbReference type="ChEBI" id="CHEBI:57945"/>
        <dbReference type="EC" id="1.1.1.261"/>
    </reaction>
</comment>
<comment type="catalytic activity">
    <reaction evidence="1">
        <text>sn-glycerol 1-phosphate + NADP(+) = dihydroxyacetone phosphate + NADPH + H(+)</text>
        <dbReference type="Rhea" id="RHEA:21416"/>
        <dbReference type="ChEBI" id="CHEBI:15378"/>
        <dbReference type="ChEBI" id="CHEBI:57642"/>
        <dbReference type="ChEBI" id="CHEBI:57685"/>
        <dbReference type="ChEBI" id="CHEBI:57783"/>
        <dbReference type="ChEBI" id="CHEBI:58349"/>
        <dbReference type="EC" id="1.1.1.261"/>
    </reaction>
</comment>
<comment type="cofactor">
    <cofactor evidence="1">
        <name>Zn(2+)</name>
        <dbReference type="ChEBI" id="CHEBI:29105"/>
    </cofactor>
    <text evidence="1">Binds 1 zinc ion per subunit.</text>
</comment>
<comment type="pathway">
    <text evidence="1">Membrane lipid metabolism; glycerophospholipid metabolism.</text>
</comment>
<comment type="subcellular location">
    <subcellularLocation>
        <location evidence="1">Cytoplasm</location>
    </subcellularLocation>
</comment>
<comment type="similarity">
    <text evidence="1">Belongs to the glycerol-1-phosphate dehydrogenase family.</text>
</comment>
<reference key="1">
    <citation type="submission" date="2007-06" db="EMBL/GenBank/DDBJ databases">
        <title>Complete sequence of Methanococcus maripaludis C7.</title>
        <authorList>
            <consortium name="US DOE Joint Genome Institute"/>
            <person name="Copeland A."/>
            <person name="Lucas S."/>
            <person name="Lapidus A."/>
            <person name="Barry K."/>
            <person name="Glavina del Rio T."/>
            <person name="Dalin E."/>
            <person name="Tice H."/>
            <person name="Pitluck S."/>
            <person name="Clum A."/>
            <person name="Schmutz J."/>
            <person name="Larimer F."/>
            <person name="Land M."/>
            <person name="Hauser L."/>
            <person name="Kyrpides N."/>
            <person name="Anderson I."/>
            <person name="Sieprawska-Lupa M."/>
            <person name="Whitman W.B."/>
            <person name="Richardson P."/>
        </authorList>
    </citation>
    <scope>NUCLEOTIDE SEQUENCE [LARGE SCALE GENOMIC DNA]</scope>
    <source>
        <strain>C7 / ATCC BAA-1331</strain>
    </source>
</reference>
<keyword id="KW-0963">Cytoplasm</keyword>
<keyword id="KW-0444">Lipid biosynthesis</keyword>
<keyword id="KW-0443">Lipid metabolism</keyword>
<keyword id="KW-0479">Metal-binding</keyword>
<keyword id="KW-0520">NAD</keyword>
<keyword id="KW-0521">NADP</keyword>
<keyword id="KW-0560">Oxidoreductase</keyword>
<keyword id="KW-0594">Phospholipid biosynthesis</keyword>
<keyword id="KW-1208">Phospholipid metabolism</keyword>
<keyword id="KW-0862">Zinc</keyword>
<proteinExistence type="inferred from homology"/>
<dbReference type="EC" id="1.1.1.261" evidence="1"/>
<dbReference type="EMBL" id="CP000745">
    <property type="protein sequence ID" value="ABR66288.1"/>
    <property type="molecule type" value="Genomic_DNA"/>
</dbReference>
<dbReference type="SMR" id="A6VIL2"/>
<dbReference type="STRING" id="426368.MmarC7_1225"/>
<dbReference type="KEGG" id="mmz:MmarC7_1225"/>
<dbReference type="eggNOG" id="arCOG00982">
    <property type="taxonomic scope" value="Archaea"/>
</dbReference>
<dbReference type="HOGENOM" id="CLU_038362_0_0_2"/>
<dbReference type="OrthoDB" id="8656at2157"/>
<dbReference type="UniPathway" id="UPA00940"/>
<dbReference type="GO" id="GO:0005737">
    <property type="term" value="C:cytoplasm"/>
    <property type="evidence" value="ECO:0007669"/>
    <property type="project" value="UniProtKB-SubCell"/>
</dbReference>
<dbReference type="GO" id="GO:0106357">
    <property type="term" value="F:glycerol-1-phosphate dehydrogenase (NAD+) activity"/>
    <property type="evidence" value="ECO:0007669"/>
    <property type="project" value="RHEA"/>
</dbReference>
<dbReference type="GO" id="GO:0106358">
    <property type="term" value="F:glycerol-1-phosphate dehydrogenase (NADP+) activity"/>
    <property type="evidence" value="ECO:0007669"/>
    <property type="project" value="RHEA"/>
</dbReference>
<dbReference type="GO" id="GO:0046872">
    <property type="term" value="F:metal ion binding"/>
    <property type="evidence" value="ECO:0007669"/>
    <property type="project" value="UniProtKB-KW"/>
</dbReference>
<dbReference type="GO" id="GO:0006650">
    <property type="term" value="P:glycerophospholipid metabolic process"/>
    <property type="evidence" value="ECO:0007669"/>
    <property type="project" value="UniProtKB-UniRule"/>
</dbReference>
<dbReference type="GO" id="GO:0008654">
    <property type="term" value="P:phospholipid biosynthetic process"/>
    <property type="evidence" value="ECO:0007669"/>
    <property type="project" value="UniProtKB-KW"/>
</dbReference>
<dbReference type="Gene3D" id="3.40.50.1970">
    <property type="match status" value="1"/>
</dbReference>
<dbReference type="Gene3D" id="1.20.1090.10">
    <property type="entry name" value="Dehydroquinate synthase-like - alpha domain"/>
    <property type="match status" value="1"/>
</dbReference>
<dbReference type="HAMAP" id="MF_00497_A">
    <property type="entry name" value="G1P_dehydrogenase_A"/>
    <property type="match status" value="1"/>
</dbReference>
<dbReference type="InterPro" id="IPR023002">
    <property type="entry name" value="G1P_dehydrogenase_arc"/>
</dbReference>
<dbReference type="InterPro" id="IPR032837">
    <property type="entry name" value="G1PDH"/>
</dbReference>
<dbReference type="InterPro" id="IPR016205">
    <property type="entry name" value="Glycerol_DH"/>
</dbReference>
<dbReference type="PANTHER" id="PTHR43616">
    <property type="entry name" value="GLYCEROL DEHYDROGENASE"/>
    <property type="match status" value="1"/>
</dbReference>
<dbReference type="PANTHER" id="PTHR43616:SF5">
    <property type="entry name" value="GLYCEROL DEHYDROGENASE 1"/>
    <property type="match status" value="1"/>
</dbReference>
<dbReference type="Pfam" id="PF13685">
    <property type="entry name" value="Fe-ADH_2"/>
    <property type="match status" value="1"/>
</dbReference>
<dbReference type="PIRSF" id="PIRSF000112">
    <property type="entry name" value="Glycerol_dehydrogenase"/>
    <property type="match status" value="1"/>
</dbReference>
<dbReference type="SUPFAM" id="SSF56796">
    <property type="entry name" value="Dehydroquinate synthase-like"/>
    <property type="match status" value="1"/>
</dbReference>